<protein>
    <recommendedName>
        <fullName evidence="1">Adenylosuccinate synthetase</fullName>
        <shortName evidence="1">AMPSase</shortName>
        <shortName evidence="1">AdSS</shortName>
        <ecNumber evidence="1">6.3.4.4</ecNumber>
    </recommendedName>
    <alternativeName>
        <fullName evidence="1">IMP--aspartate ligase</fullName>
    </alternativeName>
</protein>
<sequence length="447" mass="49214">MANVIVIGAQWGDEGKGKITDLLSRSADVVVRYQGGVNAGHTIVVKGQTFKLHLIPSGILYPNTDCIIGCGTVIDPQILIAEIDQLKELNISTDHLLISETAHVTMPYHRLIDQASEERRGSYKIGTTGRGIGPTYADKSERTGIRVLDLMDPDGLREQLEWTINYKNVILEKLYNLPPLDPQEVIEQYLGYAERLRPHVVDTSLKISDAIQRRRNILFEGAQGTLLDLDHGTYPYVTSSNPVAGGACVGTGVGPTMIDRVIGVSKAYTTRVGEGPFPTELDGELGELLCDRGAEFGTTTGRKRRCGWFDAVIGRYAVRINGMDCMALTKLDVLDELEEIQVCVAYDIDGQRSEHFPTSSRQFARCRPIYKTLPGWKVSTTECRTLEDLPQQALDYLKFLAELMEVPIAIVSLGASRDQTIIVEDPIHGPKRALLHPDGTPATLLSA</sequence>
<evidence type="ECO:0000255" key="1">
    <source>
        <dbReference type="HAMAP-Rule" id="MF_00011"/>
    </source>
</evidence>
<accession>B2J8B7</accession>
<name>PURA_NOSP7</name>
<feature type="chain" id="PRO_1000089320" description="Adenylosuccinate synthetase">
    <location>
        <begin position="1"/>
        <end position="447"/>
    </location>
</feature>
<feature type="active site" description="Proton acceptor" evidence="1">
    <location>
        <position position="13"/>
    </location>
</feature>
<feature type="active site" description="Proton donor" evidence="1">
    <location>
        <position position="41"/>
    </location>
</feature>
<feature type="binding site" evidence="1">
    <location>
        <begin position="12"/>
        <end position="18"/>
    </location>
    <ligand>
        <name>GTP</name>
        <dbReference type="ChEBI" id="CHEBI:37565"/>
    </ligand>
</feature>
<feature type="binding site" description="in other chain" evidence="1">
    <location>
        <begin position="13"/>
        <end position="16"/>
    </location>
    <ligand>
        <name>IMP</name>
        <dbReference type="ChEBI" id="CHEBI:58053"/>
        <note>ligand shared between dimeric partners</note>
    </ligand>
</feature>
<feature type="binding site" evidence="1">
    <location>
        <position position="13"/>
    </location>
    <ligand>
        <name>Mg(2+)</name>
        <dbReference type="ChEBI" id="CHEBI:18420"/>
    </ligand>
</feature>
<feature type="binding site" description="in other chain" evidence="1">
    <location>
        <begin position="38"/>
        <end position="41"/>
    </location>
    <ligand>
        <name>IMP</name>
        <dbReference type="ChEBI" id="CHEBI:58053"/>
        <note>ligand shared between dimeric partners</note>
    </ligand>
</feature>
<feature type="binding site" evidence="1">
    <location>
        <begin position="40"/>
        <end position="42"/>
    </location>
    <ligand>
        <name>GTP</name>
        <dbReference type="ChEBI" id="CHEBI:37565"/>
    </ligand>
</feature>
<feature type="binding site" evidence="1">
    <location>
        <position position="40"/>
    </location>
    <ligand>
        <name>Mg(2+)</name>
        <dbReference type="ChEBI" id="CHEBI:18420"/>
    </ligand>
</feature>
<feature type="binding site" description="in other chain" evidence="1">
    <location>
        <position position="128"/>
    </location>
    <ligand>
        <name>IMP</name>
        <dbReference type="ChEBI" id="CHEBI:58053"/>
        <note>ligand shared between dimeric partners</note>
    </ligand>
</feature>
<feature type="binding site" evidence="1">
    <location>
        <position position="142"/>
    </location>
    <ligand>
        <name>IMP</name>
        <dbReference type="ChEBI" id="CHEBI:58053"/>
        <note>ligand shared between dimeric partners</note>
    </ligand>
</feature>
<feature type="binding site" description="in other chain" evidence="1">
    <location>
        <position position="223"/>
    </location>
    <ligand>
        <name>IMP</name>
        <dbReference type="ChEBI" id="CHEBI:58053"/>
        <note>ligand shared between dimeric partners</note>
    </ligand>
</feature>
<feature type="binding site" description="in other chain" evidence="1">
    <location>
        <position position="238"/>
    </location>
    <ligand>
        <name>IMP</name>
        <dbReference type="ChEBI" id="CHEBI:58053"/>
        <note>ligand shared between dimeric partners</note>
    </ligand>
</feature>
<feature type="binding site" evidence="1">
    <location>
        <begin position="298"/>
        <end position="304"/>
    </location>
    <ligand>
        <name>substrate</name>
    </ligand>
</feature>
<feature type="binding site" description="in other chain" evidence="1">
    <location>
        <position position="302"/>
    </location>
    <ligand>
        <name>IMP</name>
        <dbReference type="ChEBI" id="CHEBI:58053"/>
        <note>ligand shared between dimeric partners</note>
    </ligand>
</feature>
<feature type="binding site" evidence="1">
    <location>
        <position position="304"/>
    </location>
    <ligand>
        <name>GTP</name>
        <dbReference type="ChEBI" id="CHEBI:37565"/>
    </ligand>
</feature>
<feature type="binding site" evidence="1">
    <location>
        <begin position="330"/>
        <end position="332"/>
    </location>
    <ligand>
        <name>GTP</name>
        <dbReference type="ChEBI" id="CHEBI:37565"/>
    </ligand>
</feature>
<feature type="binding site" evidence="1">
    <location>
        <begin position="412"/>
        <end position="414"/>
    </location>
    <ligand>
        <name>GTP</name>
        <dbReference type="ChEBI" id="CHEBI:37565"/>
    </ligand>
</feature>
<keyword id="KW-0963">Cytoplasm</keyword>
<keyword id="KW-0342">GTP-binding</keyword>
<keyword id="KW-0436">Ligase</keyword>
<keyword id="KW-0460">Magnesium</keyword>
<keyword id="KW-0479">Metal-binding</keyword>
<keyword id="KW-0547">Nucleotide-binding</keyword>
<keyword id="KW-0658">Purine biosynthesis</keyword>
<keyword id="KW-1185">Reference proteome</keyword>
<gene>
    <name evidence="1" type="primary">purA</name>
    <name type="ordered locus">Npun_F0612</name>
</gene>
<dbReference type="EC" id="6.3.4.4" evidence="1"/>
<dbReference type="EMBL" id="CP001037">
    <property type="protein sequence ID" value="ACC79366.1"/>
    <property type="molecule type" value="Genomic_DNA"/>
</dbReference>
<dbReference type="RefSeq" id="WP_012407391.1">
    <property type="nucleotide sequence ID" value="NC_010628.1"/>
</dbReference>
<dbReference type="SMR" id="B2J8B7"/>
<dbReference type="STRING" id="63737.Npun_F0612"/>
<dbReference type="EnsemblBacteria" id="ACC79366">
    <property type="protein sequence ID" value="ACC79366"/>
    <property type="gene ID" value="Npun_F0612"/>
</dbReference>
<dbReference type="KEGG" id="npu:Npun_F0612"/>
<dbReference type="eggNOG" id="COG0104">
    <property type="taxonomic scope" value="Bacteria"/>
</dbReference>
<dbReference type="HOGENOM" id="CLU_029848_0_0_3"/>
<dbReference type="OrthoDB" id="9807553at2"/>
<dbReference type="PhylomeDB" id="B2J8B7"/>
<dbReference type="UniPathway" id="UPA00075">
    <property type="reaction ID" value="UER00335"/>
</dbReference>
<dbReference type="Proteomes" id="UP000001191">
    <property type="component" value="Chromosome"/>
</dbReference>
<dbReference type="GO" id="GO:0005737">
    <property type="term" value="C:cytoplasm"/>
    <property type="evidence" value="ECO:0007669"/>
    <property type="project" value="UniProtKB-SubCell"/>
</dbReference>
<dbReference type="GO" id="GO:0004019">
    <property type="term" value="F:adenylosuccinate synthase activity"/>
    <property type="evidence" value="ECO:0007669"/>
    <property type="project" value="UniProtKB-UniRule"/>
</dbReference>
<dbReference type="GO" id="GO:0005525">
    <property type="term" value="F:GTP binding"/>
    <property type="evidence" value="ECO:0007669"/>
    <property type="project" value="UniProtKB-UniRule"/>
</dbReference>
<dbReference type="GO" id="GO:0000287">
    <property type="term" value="F:magnesium ion binding"/>
    <property type="evidence" value="ECO:0007669"/>
    <property type="project" value="UniProtKB-UniRule"/>
</dbReference>
<dbReference type="GO" id="GO:0044208">
    <property type="term" value="P:'de novo' AMP biosynthetic process"/>
    <property type="evidence" value="ECO:0007669"/>
    <property type="project" value="UniProtKB-UniRule"/>
</dbReference>
<dbReference type="GO" id="GO:0046040">
    <property type="term" value="P:IMP metabolic process"/>
    <property type="evidence" value="ECO:0007669"/>
    <property type="project" value="TreeGrafter"/>
</dbReference>
<dbReference type="CDD" id="cd03108">
    <property type="entry name" value="AdSS"/>
    <property type="match status" value="1"/>
</dbReference>
<dbReference type="FunFam" id="1.10.300.10:FF:000001">
    <property type="entry name" value="Adenylosuccinate synthetase"/>
    <property type="match status" value="1"/>
</dbReference>
<dbReference type="FunFam" id="3.90.170.10:FF:000001">
    <property type="entry name" value="Adenylosuccinate synthetase"/>
    <property type="match status" value="1"/>
</dbReference>
<dbReference type="Gene3D" id="3.40.440.10">
    <property type="entry name" value="Adenylosuccinate Synthetase, subunit A, domain 1"/>
    <property type="match status" value="1"/>
</dbReference>
<dbReference type="Gene3D" id="1.10.300.10">
    <property type="entry name" value="Adenylosuccinate Synthetase, subunit A, domain 2"/>
    <property type="match status" value="1"/>
</dbReference>
<dbReference type="Gene3D" id="3.90.170.10">
    <property type="entry name" value="Adenylosuccinate Synthetase, subunit A, domain 3"/>
    <property type="match status" value="1"/>
</dbReference>
<dbReference type="HAMAP" id="MF_00011">
    <property type="entry name" value="Adenylosucc_synth"/>
    <property type="match status" value="1"/>
</dbReference>
<dbReference type="InterPro" id="IPR018220">
    <property type="entry name" value="Adenylosuccin_syn_GTP-bd"/>
</dbReference>
<dbReference type="InterPro" id="IPR033128">
    <property type="entry name" value="Adenylosuccin_syn_Lys_AS"/>
</dbReference>
<dbReference type="InterPro" id="IPR042109">
    <property type="entry name" value="Adenylosuccinate_synth_dom1"/>
</dbReference>
<dbReference type="InterPro" id="IPR042110">
    <property type="entry name" value="Adenylosuccinate_synth_dom2"/>
</dbReference>
<dbReference type="InterPro" id="IPR042111">
    <property type="entry name" value="Adenylosuccinate_synth_dom3"/>
</dbReference>
<dbReference type="InterPro" id="IPR001114">
    <property type="entry name" value="Adenylosuccinate_synthetase"/>
</dbReference>
<dbReference type="InterPro" id="IPR027417">
    <property type="entry name" value="P-loop_NTPase"/>
</dbReference>
<dbReference type="NCBIfam" id="NF002223">
    <property type="entry name" value="PRK01117.1"/>
    <property type="match status" value="1"/>
</dbReference>
<dbReference type="NCBIfam" id="TIGR00184">
    <property type="entry name" value="purA"/>
    <property type="match status" value="1"/>
</dbReference>
<dbReference type="PANTHER" id="PTHR11846">
    <property type="entry name" value="ADENYLOSUCCINATE SYNTHETASE"/>
    <property type="match status" value="1"/>
</dbReference>
<dbReference type="PANTHER" id="PTHR11846:SF0">
    <property type="entry name" value="ADENYLOSUCCINATE SYNTHETASE"/>
    <property type="match status" value="1"/>
</dbReference>
<dbReference type="Pfam" id="PF00709">
    <property type="entry name" value="Adenylsucc_synt"/>
    <property type="match status" value="1"/>
</dbReference>
<dbReference type="SMART" id="SM00788">
    <property type="entry name" value="Adenylsucc_synt"/>
    <property type="match status" value="1"/>
</dbReference>
<dbReference type="SUPFAM" id="SSF52540">
    <property type="entry name" value="P-loop containing nucleoside triphosphate hydrolases"/>
    <property type="match status" value="1"/>
</dbReference>
<dbReference type="PROSITE" id="PS01266">
    <property type="entry name" value="ADENYLOSUCCIN_SYN_1"/>
    <property type="match status" value="1"/>
</dbReference>
<dbReference type="PROSITE" id="PS00513">
    <property type="entry name" value="ADENYLOSUCCIN_SYN_2"/>
    <property type="match status" value="1"/>
</dbReference>
<reference key="1">
    <citation type="journal article" date="2013" name="Plant Physiol.">
        <title>A Nostoc punctiforme Sugar Transporter Necessary to Establish a Cyanobacterium-Plant Symbiosis.</title>
        <authorList>
            <person name="Ekman M."/>
            <person name="Picossi S."/>
            <person name="Campbell E.L."/>
            <person name="Meeks J.C."/>
            <person name="Flores E."/>
        </authorList>
    </citation>
    <scope>NUCLEOTIDE SEQUENCE [LARGE SCALE GENOMIC DNA]</scope>
    <source>
        <strain>ATCC 29133 / PCC 73102</strain>
    </source>
</reference>
<proteinExistence type="inferred from homology"/>
<comment type="function">
    <text evidence="1">Plays an important role in the de novo pathway of purine nucleotide biosynthesis. Catalyzes the first committed step in the biosynthesis of AMP from IMP.</text>
</comment>
<comment type="catalytic activity">
    <reaction evidence="1">
        <text>IMP + L-aspartate + GTP = N(6)-(1,2-dicarboxyethyl)-AMP + GDP + phosphate + 2 H(+)</text>
        <dbReference type="Rhea" id="RHEA:15753"/>
        <dbReference type="ChEBI" id="CHEBI:15378"/>
        <dbReference type="ChEBI" id="CHEBI:29991"/>
        <dbReference type="ChEBI" id="CHEBI:37565"/>
        <dbReference type="ChEBI" id="CHEBI:43474"/>
        <dbReference type="ChEBI" id="CHEBI:57567"/>
        <dbReference type="ChEBI" id="CHEBI:58053"/>
        <dbReference type="ChEBI" id="CHEBI:58189"/>
        <dbReference type="EC" id="6.3.4.4"/>
    </reaction>
</comment>
<comment type="cofactor">
    <cofactor evidence="1">
        <name>Mg(2+)</name>
        <dbReference type="ChEBI" id="CHEBI:18420"/>
    </cofactor>
    <text evidence="1">Binds 1 Mg(2+) ion per subunit.</text>
</comment>
<comment type="pathway">
    <text evidence="1">Purine metabolism; AMP biosynthesis via de novo pathway; AMP from IMP: step 1/2.</text>
</comment>
<comment type="subunit">
    <text evidence="1">Homodimer.</text>
</comment>
<comment type="subcellular location">
    <subcellularLocation>
        <location evidence="1">Cytoplasm</location>
    </subcellularLocation>
</comment>
<comment type="similarity">
    <text evidence="1">Belongs to the adenylosuccinate synthetase family.</text>
</comment>
<organism>
    <name type="scientific">Nostoc punctiforme (strain ATCC 29133 / PCC 73102)</name>
    <dbReference type="NCBI Taxonomy" id="63737"/>
    <lineage>
        <taxon>Bacteria</taxon>
        <taxon>Bacillati</taxon>
        <taxon>Cyanobacteriota</taxon>
        <taxon>Cyanophyceae</taxon>
        <taxon>Nostocales</taxon>
        <taxon>Nostocaceae</taxon>
        <taxon>Nostoc</taxon>
    </lineage>
</organism>